<accession>Q7N3Q3</accession>
<gene>
    <name evidence="1" type="primary">btuC</name>
    <name type="ordered locus">plu2662</name>
</gene>
<name>BTUC_PHOLL</name>
<proteinExistence type="inferred from homology"/>
<reference key="1">
    <citation type="journal article" date="2003" name="Nat. Biotechnol.">
        <title>The genome sequence of the entomopathogenic bacterium Photorhabdus luminescens.</title>
        <authorList>
            <person name="Duchaud E."/>
            <person name="Rusniok C."/>
            <person name="Frangeul L."/>
            <person name="Buchrieser C."/>
            <person name="Givaudan A."/>
            <person name="Taourit S."/>
            <person name="Bocs S."/>
            <person name="Boursaux-Eude C."/>
            <person name="Chandler M."/>
            <person name="Charles J.-F."/>
            <person name="Dassa E."/>
            <person name="Derose R."/>
            <person name="Derzelle S."/>
            <person name="Freyssinet G."/>
            <person name="Gaudriault S."/>
            <person name="Medigue C."/>
            <person name="Lanois A."/>
            <person name="Powell K."/>
            <person name="Siguier P."/>
            <person name="Vincent R."/>
            <person name="Wingate V."/>
            <person name="Zouine M."/>
            <person name="Glaser P."/>
            <person name="Boemare N."/>
            <person name="Danchin A."/>
            <person name="Kunst F."/>
        </authorList>
    </citation>
    <scope>NUCLEOTIDE SEQUENCE [LARGE SCALE GENOMIC DNA]</scope>
    <source>
        <strain>DSM 15139 / CIP 105565 / TT01</strain>
    </source>
</reference>
<evidence type="ECO:0000255" key="1">
    <source>
        <dbReference type="HAMAP-Rule" id="MF_01004"/>
    </source>
</evidence>
<keyword id="KW-0997">Cell inner membrane</keyword>
<keyword id="KW-1003">Cell membrane</keyword>
<keyword id="KW-0472">Membrane</keyword>
<keyword id="KW-1185">Reference proteome</keyword>
<keyword id="KW-0812">Transmembrane</keyword>
<keyword id="KW-1133">Transmembrane helix</keyword>
<keyword id="KW-0813">Transport</keyword>
<comment type="function">
    <text evidence="1">Part of the ABC transporter complex BtuCDF involved in vitamin B12 import. Involved in the translocation of the substrate across the membrane.</text>
</comment>
<comment type="subunit">
    <text evidence="1">The complex is composed of two ATP-binding proteins (BtuD), two transmembrane proteins (BtuC) and a solute-binding protein (BtuF).</text>
</comment>
<comment type="subcellular location">
    <subcellularLocation>
        <location evidence="1">Cell inner membrane</location>
        <topology evidence="1">Multi-pass membrane protein</topology>
    </subcellularLocation>
</comment>
<comment type="similarity">
    <text evidence="1">Belongs to the binding-protein-dependent transport system permease family. FecCD subfamily.</text>
</comment>
<feature type="chain" id="PRO_0000059972" description="Vitamin B12 import system permease protein BtuC">
    <location>
        <begin position="1"/>
        <end position="335"/>
    </location>
</feature>
<feature type="transmembrane region" description="Helical" evidence="1">
    <location>
        <begin position="21"/>
        <end position="43"/>
    </location>
</feature>
<feature type="transmembrane region" description="Helical" evidence="1">
    <location>
        <begin position="63"/>
        <end position="82"/>
    </location>
</feature>
<feature type="transmembrane region" description="Helical" evidence="1">
    <location>
        <begin position="95"/>
        <end position="114"/>
    </location>
</feature>
<feature type="transmembrane region" description="Helical" evidence="1">
    <location>
        <begin position="119"/>
        <end position="141"/>
    </location>
</feature>
<feature type="transmembrane region" description="Helical" evidence="1">
    <location>
        <begin position="153"/>
        <end position="175"/>
    </location>
</feature>
<feature type="transmembrane region" description="Helical" evidence="1">
    <location>
        <begin position="195"/>
        <end position="212"/>
    </location>
</feature>
<feature type="transmembrane region" description="Helical" evidence="1">
    <location>
        <begin position="244"/>
        <end position="266"/>
    </location>
</feature>
<feature type="transmembrane region" description="Helical" evidence="1">
    <location>
        <begin position="281"/>
        <end position="303"/>
    </location>
</feature>
<feature type="transmembrane region" description="Helical" evidence="1">
    <location>
        <begin position="310"/>
        <end position="329"/>
    </location>
</feature>
<organism>
    <name type="scientific">Photorhabdus laumondii subsp. laumondii (strain DSM 15139 / CIP 105565 / TT01)</name>
    <name type="common">Photorhabdus luminescens subsp. laumondii</name>
    <dbReference type="NCBI Taxonomy" id="243265"/>
    <lineage>
        <taxon>Bacteria</taxon>
        <taxon>Pseudomonadati</taxon>
        <taxon>Pseudomonadota</taxon>
        <taxon>Gammaproteobacteria</taxon>
        <taxon>Enterobacterales</taxon>
        <taxon>Morganellaceae</taxon>
        <taxon>Photorhabdus</taxon>
    </lineage>
</organism>
<protein>
    <recommendedName>
        <fullName evidence="1">Vitamin B12 import system permease protein BtuC</fullName>
    </recommendedName>
</protein>
<sequence length="335" mass="37056">MQSTHSIAELVTRQKRHDYRFLAILTCLFLLVFFLSLCAGENWIWPNKWFSETGQLFVWQLRFPRVLAVVAVGASLTVAGAVMQALFENPLAEPGLLGVSNGAGVVVVFLVLMFHGIAPFWLLSIGAVLGALTVTMILLTFSRNRYLNNARLLLVGVAFGVASGALMTWMVYFSTSLDLRQLMYWMMGSFSGIDWRHQWLVVALFPLIIWLSRQGKVLNFLSLGETQAQQLGISLYYWRNLFVFAVGLLVGLSVALAGTISFIGLVIPHILRLCGLTDYKTLLPACVLSGGYGLLLADLLSRLSLNNAEVPIGVVTATLGAPVFIWLLLRVRDWS</sequence>
<dbReference type="EMBL" id="BX571867">
    <property type="protein sequence ID" value="CAE15036.1"/>
    <property type="molecule type" value="Genomic_DNA"/>
</dbReference>
<dbReference type="RefSeq" id="WP_011146884.1">
    <property type="nucleotide sequence ID" value="NC_005126.1"/>
</dbReference>
<dbReference type="SMR" id="Q7N3Q3"/>
<dbReference type="STRING" id="243265.plu2662"/>
<dbReference type="GeneID" id="48848925"/>
<dbReference type="KEGG" id="plu:plu2662"/>
<dbReference type="eggNOG" id="COG4139">
    <property type="taxonomic scope" value="Bacteria"/>
</dbReference>
<dbReference type="HOGENOM" id="CLU_013016_0_3_6"/>
<dbReference type="OrthoDB" id="9055647at2"/>
<dbReference type="Proteomes" id="UP000002514">
    <property type="component" value="Chromosome"/>
</dbReference>
<dbReference type="GO" id="GO:0005886">
    <property type="term" value="C:plasma membrane"/>
    <property type="evidence" value="ECO:0007669"/>
    <property type="project" value="UniProtKB-SubCell"/>
</dbReference>
<dbReference type="GO" id="GO:0090482">
    <property type="term" value="F:vitamin transmembrane transporter activity"/>
    <property type="evidence" value="ECO:0007669"/>
    <property type="project" value="UniProtKB-UniRule"/>
</dbReference>
<dbReference type="GO" id="GO:0015889">
    <property type="term" value="P:cobalamin transport"/>
    <property type="evidence" value="ECO:0007669"/>
    <property type="project" value="UniProtKB-UniRule"/>
</dbReference>
<dbReference type="CDD" id="cd06550">
    <property type="entry name" value="TM_ABC_iron-siderophores_like"/>
    <property type="match status" value="1"/>
</dbReference>
<dbReference type="FunFam" id="1.10.3470.10:FF:000001">
    <property type="entry name" value="Vitamin B12 ABC transporter permease BtuC"/>
    <property type="match status" value="1"/>
</dbReference>
<dbReference type="Gene3D" id="1.10.3470.10">
    <property type="entry name" value="ABC transporter involved in vitamin B12 uptake, BtuC"/>
    <property type="match status" value="1"/>
</dbReference>
<dbReference type="HAMAP" id="MF_01004">
    <property type="entry name" value="BtuC"/>
    <property type="match status" value="1"/>
</dbReference>
<dbReference type="InterPro" id="IPR037294">
    <property type="entry name" value="ABC_BtuC-like"/>
</dbReference>
<dbReference type="InterPro" id="IPR023691">
    <property type="entry name" value="ABC_transptr_BtuC"/>
</dbReference>
<dbReference type="InterPro" id="IPR000522">
    <property type="entry name" value="ABC_transptr_permease_BtuC"/>
</dbReference>
<dbReference type="NCBIfam" id="NF003001">
    <property type="entry name" value="PRK03784.1"/>
    <property type="match status" value="1"/>
</dbReference>
<dbReference type="PANTHER" id="PTHR30472">
    <property type="entry name" value="FERRIC ENTEROBACTIN TRANSPORT SYSTEM PERMEASE PROTEIN"/>
    <property type="match status" value="1"/>
</dbReference>
<dbReference type="PANTHER" id="PTHR30472:SF29">
    <property type="entry name" value="VITAMIN B12 IMPORT SYSTEM PERMEASE PROTEIN BTUC"/>
    <property type="match status" value="1"/>
</dbReference>
<dbReference type="Pfam" id="PF01032">
    <property type="entry name" value="FecCD"/>
    <property type="match status" value="1"/>
</dbReference>
<dbReference type="SUPFAM" id="SSF81345">
    <property type="entry name" value="ABC transporter involved in vitamin B12 uptake, BtuC"/>
    <property type="match status" value="1"/>
</dbReference>